<sequence length="179" mass="19493">MSRIGKQPIPVPAGVDITIDGQNVLVKGPKGTLDLTVAEPIMLARNDEGAIVVTRPDNERRNRSLHGLSRTLVSNLVTGVTQGYTVSMEIFGVGYRAQLKGSNLEFALGYSHPVVIEAPEGITFAVQSPTKFTITGIDKQKVGQISANIRRLRRPDPYKGKGVRYEGEQIRRKVGKTGK</sequence>
<protein>
    <recommendedName>
        <fullName evidence="1">Large ribosomal subunit protein uL6</fullName>
    </recommendedName>
    <alternativeName>
        <fullName evidence="2">50S ribosomal protein L6</fullName>
    </alternativeName>
</protein>
<name>RL6_MYCLB</name>
<feature type="chain" id="PRO_1000166821" description="Large ribosomal subunit protein uL6">
    <location>
        <begin position="1"/>
        <end position="179"/>
    </location>
</feature>
<gene>
    <name evidence="1" type="primary">rplF</name>
    <name type="ordered locus">MLBr01844</name>
</gene>
<comment type="function">
    <text evidence="1">This protein binds to the 23S rRNA, and is important in its secondary structure. It is located near the subunit interface in the base of the L7/L12 stalk, and near the tRNA binding site of the peptidyltransferase center.</text>
</comment>
<comment type="subunit">
    <text evidence="1">Part of the 50S ribosomal subunit.</text>
</comment>
<comment type="similarity">
    <text evidence="1">Belongs to the universal ribosomal protein uL6 family.</text>
</comment>
<reference key="1">
    <citation type="journal article" date="2009" name="Nat. Genet.">
        <title>Comparative genomic and phylogeographic analysis of Mycobacterium leprae.</title>
        <authorList>
            <person name="Monot M."/>
            <person name="Honore N."/>
            <person name="Garnier T."/>
            <person name="Zidane N."/>
            <person name="Sherafi D."/>
            <person name="Paniz-Mondolfi A."/>
            <person name="Matsuoka M."/>
            <person name="Taylor G.M."/>
            <person name="Donoghue H.D."/>
            <person name="Bouwman A."/>
            <person name="Mays S."/>
            <person name="Watson C."/>
            <person name="Lockwood D."/>
            <person name="Khamispour A."/>
            <person name="Dowlati Y."/>
            <person name="Jianping S."/>
            <person name="Rea T.H."/>
            <person name="Vera-Cabrera L."/>
            <person name="Stefani M.M."/>
            <person name="Banu S."/>
            <person name="Macdonald M."/>
            <person name="Sapkota B.R."/>
            <person name="Spencer J.S."/>
            <person name="Thomas J."/>
            <person name="Harshman K."/>
            <person name="Singh P."/>
            <person name="Busso P."/>
            <person name="Gattiker A."/>
            <person name="Rougemont J."/>
            <person name="Brennan P.J."/>
            <person name="Cole S.T."/>
        </authorList>
    </citation>
    <scope>NUCLEOTIDE SEQUENCE [LARGE SCALE GENOMIC DNA]</scope>
    <source>
        <strain>Br4923</strain>
    </source>
</reference>
<dbReference type="EMBL" id="FM211192">
    <property type="protein sequence ID" value="CAR71940.1"/>
    <property type="molecule type" value="Genomic_DNA"/>
</dbReference>
<dbReference type="SMR" id="B8ZSA4"/>
<dbReference type="KEGG" id="mlb:MLBr01844"/>
<dbReference type="HOGENOM" id="CLU_065464_1_2_11"/>
<dbReference type="Proteomes" id="UP000006900">
    <property type="component" value="Chromosome"/>
</dbReference>
<dbReference type="GO" id="GO:0022625">
    <property type="term" value="C:cytosolic large ribosomal subunit"/>
    <property type="evidence" value="ECO:0007669"/>
    <property type="project" value="TreeGrafter"/>
</dbReference>
<dbReference type="GO" id="GO:0019843">
    <property type="term" value="F:rRNA binding"/>
    <property type="evidence" value="ECO:0007669"/>
    <property type="project" value="UniProtKB-UniRule"/>
</dbReference>
<dbReference type="GO" id="GO:0003735">
    <property type="term" value="F:structural constituent of ribosome"/>
    <property type="evidence" value="ECO:0007669"/>
    <property type="project" value="InterPro"/>
</dbReference>
<dbReference type="GO" id="GO:0002181">
    <property type="term" value="P:cytoplasmic translation"/>
    <property type="evidence" value="ECO:0007669"/>
    <property type="project" value="TreeGrafter"/>
</dbReference>
<dbReference type="FunFam" id="3.90.930.12:FF:000001">
    <property type="entry name" value="50S ribosomal protein L6"/>
    <property type="match status" value="1"/>
</dbReference>
<dbReference type="FunFam" id="3.90.930.12:FF:000002">
    <property type="entry name" value="50S ribosomal protein L6"/>
    <property type="match status" value="1"/>
</dbReference>
<dbReference type="Gene3D" id="3.90.930.12">
    <property type="entry name" value="Ribosomal protein L6, alpha-beta domain"/>
    <property type="match status" value="2"/>
</dbReference>
<dbReference type="HAMAP" id="MF_01365_B">
    <property type="entry name" value="Ribosomal_uL6_B"/>
    <property type="match status" value="1"/>
</dbReference>
<dbReference type="InterPro" id="IPR000702">
    <property type="entry name" value="Ribosomal_uL6-like"/>
</dbReference>
<dbReference type="InterPro" id="IPR036789">
    <property type="entry name" value="Ribosomal_uL6-like_a/b-dom_sf"/>
</dbReference>
<dbReference type="InterPro" id="IPR020040">
    <property type="entry name" value="Ribosomal_uL6_a/b-dom"/>
</dbReference>
<dbReference type="InterPro" id="IPR019906">
    <property type="entry name" value="Ribosomal_uL6_bac-type"/>
</dbReference>
<dbReference type="InterPro" id="IPR002358">
    <property type="entry name" value="Ribosomal_uL6_CS"/>
</dbReference>
<dbReference type="NCBIfam" id="TIGR03654">
    <property type="entry name" value="L6_bact"/>
    <property type="match status" value="1"/>
</dbReference>
<dbReference type="PANTHER" id="PTHR11655">
    <property type="entry name" value="60S/50S RIBOSOMAL PROTEIN L6/L9"/>
    <property type="match status" value="1"/>
</dbReference>
<dbReference type="PANTHER" id="PTHR11655:SF14">
    <property type="entry name" value="LARGE RIBOSOMAL SUBUNIT PROTEIN UL6M"/>
    <property type="match status" value="1"/>
</dbReference>
<dbReference type="Pfam" id="PF00347">
    <property type="entry name" value="Ribosomal_L6"/>
    <property type="match status" value="2"/>
</dbReference>
<dbReference type="PIRSF" id="PIRSF002162">
    <property type="entry name" value="Ribosomal_L6"/>
    <property type="match status" value="1"/>
</dbReference>
<dbReference type="PRINTS" id="PR00059">
    <property type="entry name" value="RIBOSOMALL6"/>
</dbReference>
<dbReference type="SUPFAM" id="SSF56053">
    <property type="entry name" value="Ribosomal protein L6"/>
    <property type="match status" value="2"/>
</dbReference>
<dbReference type="PROSITE" id="PS00525">
    <property type="entry name" value="RIBOSOMAL_L6_1"/>
    <property type="match status" value="1"/>
</dbReference>
<proteinExistence type="inferred from homology"/>
<accession>B8ZSA4</accession>
<organism>
    <name type="scientific">Mycobacterium leprae (strain Br4923)</name>
    <dbReference type="NCBI Taxonomy" id="561304"/>
    <lineage>
        <taxon>Bacteria</taxon>
        <taxon>Bacillati</taxon>
        <taxon>Actinomycetota</taxon>
        <taxon>Actinomycetes</taxon>
        <taxon>Mycobacteriales</taxon>
        <taxon>Mycobacteriaceae</taxon>
        <taxon>Mycobacterium</taxon>
    </lineage>
</organism>
<evidence type="ECO:0000255" key="1">
    <source>
        <dbReference type="HAMAP-Rule" id="MF_01365"/>
    </source>
</evidence>
<evidence type="ECO:0000305" key="2"/>
<keyword id="KW-0687">Ribonucleoprotein</keyword>
<keyword id="KW-0689">Ribosomal protein</keyword>
<keyword id="KW-0694">RNA-binding</keyword>
<keyword id="KW-0699">rRNA-binding</keyword>